<name>TSAD_DEHMC</name>
<comment type="function">
    <text evidence="1">Required for the formation of a threonylcarbamoyl group on adenosine at position 37 (t(6)A37) in tRNAs that read codons beginning with adenine. Is involved in the transfer of the threonylcarbamoyl moiety of threonylcarbamoyl-AMP (TC-AMP) to the N6 group of A37, together with TsaE and TsaB. TsaD likely plays a direct catalytic role in this reaction.</text>
</comment>
<comment type="catalytic activity">
    <reaction evidence="1">
        <text>L-threonylcarbamoyladenylate + adenosine(37) in tRNA = N(6)-L-threonylcarbamoyladenosine(37) in tRNA + AMP + H(+)</text>
        <dbReference type="Rhea" id="RHEA:37059"/>
        <dbReference type="Rhea" id="RHEA-COMP:10162"/>
        <dbReference type="Rhea" id="RHEA-COMP:10163"/>
        <dbReference type="ChEBI" id="CHEBI:15378"/>
        <dbReference type="ChEBI" id="CHEBI:73682"/>
        <dbReference type="ChEBI" id="CHEBI:74411"/>
        <dbReference type="ChEBI" id="CHEBI:74418"/>
        <dbReference type="ChEBI" id="CHEBI:456215"/>
        <dbReference type="EC" id="2.3.1.234"/>
    </reaction>
</comment>
<comment type="cofactor">
    <cofactor evidence="1">
        <name>Fe(2+)</name>
        <dbReference type="ChEBI" id="CHEBI:29033"/>
    </cofactor>
    <text evidence="1">Binds 1 Fe(2+) ion per subunit.</text>
</comment>
<comment type="subcellular location">
    <subcellularLocation>
        <location evidence="1">Cytoplasm</location>
    </subcellularLocation>
</comment>
<comment type="similarity">
    <text evidence="1">Belongs to the KAE1 / TsaD family.</text>
</comment>
<dbReference type="EC" id="2.3.1.234" evidence="1"/>
<dbReference type="EMBL" id="AJ965256">
    <property type="protein sequence ID" value="CAI83434.1"/>
    <property type="molecule type" value="Genomic_DNA"/>
</dbReference>
<dbReference type="RefSeq" id="WP_011309785.1">
    <property type="nucleotide sequence ID" value="NC_007356.1"/>
</dbReference>
<dbReference type="SMR" id="Q3ZYX0"/>
<dbReference type="KEGG" id="deh:cbdbA1390"/>
<dbReference type="HOGENOM" id="CLU_023208_0_2_0"/>
<dbReference type="Proteomes" id="UP000000433">
    <property type="component" value="Chromosome"/>
</dbReference>
<dbReference type="GO" id="GO:0005737">
    <property type="term" value="C:cytoplasm"/>
    <property type="evidence" value="ECO:0007669"/>
    <property type="project" value="UniProtKB-SubCell"/>
</dbReference>
<dbReference type="GO" id="GO:0005506">
    <property type="term" value="F:iron ion binding"/>
    <property type="evidence" value="ECO:0007669"/>
    <property type="project" value="UniProtKB-UniRule"/>
</dbReference>
<dbReference type="GO" id="GO:0061711">
    <property type="term" value="F:N(6)-L-threonylcarbamoyladenine synthase activity"/>
    <property type="evidence" value="ECO:0007669"/>
    <property type="project" value="UniProtKB-EC"/>
</dbReference>
<dbReference type="GO" id="GO:0002949">
    <property type="term" value="P:tRNA threonylcarbamoyladenosine modification"/>
    <property type="evidence" value="ECO:0007669"/>
    <property type="project" value="UniProtKB-UniRule"/>
</dbReference>
<dbReference type="CDD" id="cd24133">
    <property type="entry name" value="ASKHA_NBD_TsaD_bac"/>
    <property type="match status" value="1"/>
</dbReference>
<dbReference type="FunFam" id="3.30.420.40:FF:000040">
    <property type="entry name" value="tRNA N6-adenosine threonylcarbamoyltransferase"/>
    <property type="match status" value="1"/>
</dbReference>
<dbReference type="Gene3D" id="3.30.420.40">
    <property type="match status" value="2"/>
</dbReference>
<dbReference type="HAMAP" id="MF_01445">
    <property type="entry name" value="TsaD"/>
    <property type="match status" value="1"/>
</dbReference>
<dbReference type="InterPro" id="IPR043129">
    <property type="entry name" value="ATPase_NBD"/>
</dbReference>
<dbReference type="InterPro" id="IPR000905">
    <property type="entry name" value="Gcp-like_dom"/>
</dbReference>
<dbReference type="InterPro" id="IPR017861">
    <property type="entry name" value="KAE1/TsaD"/>
</dbReference>
<dbReference type="InterPro" id="IPR022450">
    <property type="entry name" value="TsaD"/>
</dbReference>
<dbReference type="NCBIfam" id="TIGR00329">
    <property type="entry name" value="gcp_kae1"/>
    <property type="match status" value="1"/>
</dbReference>
<dbReference type="NCBIfam" id="TIGR03723">
    <property type="entry name" value="T6A_TsaD_YgjD"/>
    <property type="match status" value="1"/>
</dbReference>
<dbReference type="PANTHER" id="PTHR11735">
    <property type="entry name" value="TRNA N6-ADENOSINE THREONYLCARBAMOYLTRANSFERASE"/>
    <property type="match status" value="1"/>
</dbReference>
<dbReference type="PANTHER" id="PTHR11735:SF6">
    <property type="entry name" value="TRNA N6-ADENOSINE THREONYLCARBAMOYLTRANSFERASE, MITOCHONDRIAL"/>
    <property type="match status" value="1"/>
</dbReference>
<dbReference type="Pfam" id="PF00814">
    <property type="entry name" value="TsaD"/>
    <property type="match status" value="1"/>
</dbReference>
<dbReference type="PRINTS" id="PR00789">
    <property type="entry name" value="OSIALOPTASE"/>
</dbReference>
<dbReference type="SUPFAM" id="SSF53067">
    <property type="entry name" value="Actin-like ATPase domain"/>
    <property type="match status" value="1"/>
</dbReference>
<gene>
    <name evidence="1" type="primary">tsaD</name>
    <name type="synonym">gcp</name>
    <name type="ordered locus">cbdbA1390</name>
</gene>
<accession>Q3ZYX0</accession>
<keyword id="KW-0012">Acyltransferase</keyword>
<keyword id="KW-0963">Cytoplasm</keyword>
<keyword id="KW-0408">Iron</keyword>
<keyword id="KW-0479">Metal-binding</keyword>
<keyword id="KW-0808">Transferase</keyword>
<keyword id="KW-0819">tRNA processing</keyword>
<evidence type="ECO:0000255" key="1">
    <source>
        <dbReference type="HAMAP-Rule" id="MF_01445"/>
    </source>
</evidence>
<organism>
    <name type="scientific">Dehalococcoides mccartyi (strain CBDB1)</name>
    <dbReference type="NCBI Taxonomy" id="255470"/>
    <lineage>
        <taxon>Bacteria</taxon>
        <taxon>Bacillati</taxon>
        <taxon>Chloroflexota</taxon>
        <taxon>Dehalococcoidia</taxon>
        <taxon>Dehalococcoidales</taxon>
        <taxon>Dehalococcoidaceae</taxon>
        <taxon>Dehalococcoides</taxon>
    </lineage>
</organism>
<reference key="1">
    <citation type="journal article" date="2005" name="Nat. Biotechnol.">
        <title>Genome sequence of the chlorinated compound-respiring bacterium Dehalococcoides species strain CBDB1.</title>
        <authorList>
            <person name="Kube M."/>
            <person name="Beck A."/>
            <person name="Zinder S.H."/>
            <person name="Kuhl H."/>
            <person name="Reinhardt R."/>
            <person name="Adrian L."/>
        </authorList>
    </citation>
    <scope>NUCLEOTIDE SEQUENCE [LARGE SCALE GENOMIC DNA]</scope>
    <source>
        <strain>CBDB1</strain>
    </source>
</reference>
<sequence>MKILGIESSCDETAASVVEDGVNILSNRISSQIDIHSRYGGVVPEVASRQHLLSILPVIKDALEEARTGLDEISAIAITNGPGLAGSLIVGVNAAKAIAAARRIPLVAVNHLHGHIYANWLFGKIPEFPCLCLTVSGGHTDLVLMSGHGQYQLLGRTRDDAAGEAFDKAARILGLSYPGGPAIDRASQDGQAVLDLPRSWIPGSHDFSFSGLKTALLRLVESGEVCSVNDAAASFQKAVVDVLVTKTINCAQEYNVKQILLAGGVAANNLLRKQLSEKSSLPVSIPPMGLCTDNAAVIASCGYFRFISGKQDGLDMDVLPALSVTS</sequence>
<proteinExistence type="inferred from homology"/>
<feature type="chain" id="PRO_0000303344" description="tRNA N6-adenosine threonylcarbamoyltransferase">
    <location>
        <begin position="1"/>
        <end position="326"/>
    </location>
</feature>
<feature type="binding site" evidence="1">
    <location>
        <position position="111"/>
    </location>
    <ligand>
        <name>Fe cation</name>
        <dbReference type="ChEBI" id="CHEBI:24875"/>
    </ligand>
</feature>
<feature type="binding site" evidence="1">
    <location>
        <position position="115"/>
    </location>
    <ligand>
        <name>Fe cation</name>
        <dbReference type="ChEBI" id="CHEBI:24875"/>
    </ligand>
</feature>
<feature type="binding site" evidence="1">
    <location>
        <begin position="134"/>
        <end position="138"/>
    </location>
    <ligand>
        <name>substrate</name>
    </ligand>
</feature>
<feature type="binding site" evidence="1">
    <location>
        <position position="167"/>
    </location>
    <ligand>
        <name>substrate</name>
    </ligand>
</feature>
<feature type="binding site" evidence="1">
    <location>
        <position position="180"/>
    </location>
    <ligand>
        <name>substrate</name>
    </ligand>
</feature>
<feature type="binding site" evidence="1">
    <location>
        <position position="184"/>
    </location>
    <ligand>
        <name>substrate</name>
    </ligand>
</feature>
<feature type="binding site" evidence="1">
    <location>
        <position position="268"/>
    </location>
    <ligand>
        <name>substrate</name>
    </ligand>
</feature>
<feature type="binding site" evidence="1">
    <location>
        <position position="293"/>
    </location>
    <ligand>
        <name>Fe cation</name>
        <dbReference type="ChEBI" id="CHEBI:24875"/>
    </ligand>
</feature>
<protein>
    <recommendedName>
        <fullName evidence="1">tRNA N6-adenosine threonylcarbamoyltransferase</fullName>
        <ecNumber evidence="1">2.3.1.234</ecNumber>
    </recommendedName>
    <alternativeName>
        <fullName evidence="1">N6-L-threonylcarbamoyladenine synthase</fullName>
        <shortName evidence="1">t(6)A synthase</shortName>
    </alternativeName>
    <alternativeName>
        <fullName evidence="1">t(6)A37 threonylcarbamoyladenosine biosynthesis protein TsaD</fullName>
    </alternativeName>
    <alternativeName>
        <fullName evidence="1">tRNA threonylcarbamoyladenosine biosynthesis protein TsaD</fullName>
    </alternativeName>
</protein>